<dbReference type="EMBL" id="BX571857">
    <property type="protein sequence ID" value="CAG42368.1"/>
    <property type="molecule type" value="Genomic_DNA"/>
</dbReference>
<dbReference type="RefSeq" id="WP_001071973.1">
    <property type="nucleotide sequence ID" value="NC_002953.3"/>
</dbReference>
<dbReference type="SMR" id="Q6GBK3"/>
<dbReference type="KEGG" id="sas:SAS0593"/>
<dbReference type="HOGENOM" id="CLU_086615_3_2_9"/>
<dbReference type="GO" id="GO:0005886">
    <property type="term" value="C:plasma membrane"/>
    <property type="evidence" value="ECO:0007669"/>
    <property type="project" value="UniProtKB-SubCell"/>
</dbReference>
<dbReference type="GO" id="GO:0015297">
    <property type="term" value="F:antiporter activity"/>
    <property type="evidence" value="ECO:0007669"/>
    <property type="project" value="UniProtKB-KW"/>
</dbReference>
<dbReference type="GO" id="GO:0008324">
    <property type="term" value="F:monoatomic cation transmembrane transporter activity"/>
    <property type="evidence" value="ECO:0007669"/>
    <property type="project" value="InterPro"/>
</dbReference>
<dbReference type="InterPro" id="IPR002758">
    <property type="entry name" value="Cation_antiport_E"/>
</dbReference>
<dbReference type="NCBIfam" id="NF006517">
    <property type="entry name" value="PRK08965.1-1"/>
    <property type="match status" value="1"/>
</dbReference>
<dbReference type="PANTHER" id="PTHR34584">
    <property type="entry name" value="NA(+)/H(+) ANTIPORTER SUBUNIT E1"/>
    <property type="match status" value="1"/>
</dbReference>
<dbReference type="PANTHER" id="PTHR34584:SF1">
    <property type="entry name" value="NA(+)_H(+) ANTIPORTER SUBUNIT E1"/>
    <property type="match status" value="1"/>
</dbReference>
<dbReference type="Pfam" id="PF01899">
    <property type="entry name" value="MNHE"/>
    <property type="match status" value="1"/>
</dbReference>
<dbReference type="PIRSF" id="PIRSF019239">
    <property type="entry name" value="MrpE"/>
    <property type="match status" value="1"/>
</dbReference>
<reference key="1">
    <citation type="journal article" date="2004" name="Proc. Natl. Acad. Sci. U.S.A.">
        <title>Complete genomes of two clinical Staphylococcus aureus strains: evidence for the rapid evolution of virulence and drug resistance.</title>
        <authorList>
            <person name="Holden M.T.G."/>
            <person name="Feil E.J."/>
            <person name="Lindsay J.A."/>
            <person name="Peacock S.J."/>
            <person name="Day N.P.J."/>
            <person name="Enright M.C."/>
            <person name="Foster T.J."/>
            <person name="Moore C.E."/>
            <person name="Hurst L."/>
            <person name="Atkin R."/>
            <person name="Barron A."/>
            <person name="Bason N."/>
            <person name="Bentley S.D."/>
            <person name="Chillingworth C."/>
            <person name="Chillingworth T."/>
            <person name="Churcher C."/>
            <person name="Clark L."/>
            <person name="Corton C."/>
            <person name="Cronin A."/>
            <person name="Doggett J."/>
            <person name="Dowd L."/>
            <person name="Feltwell T."/>
            <person name="Hance Z."/>
            <person name="Harris B."/>
            <person name="Hauser H."/>
            <person name="Holroyd S."/>
            <person name="Jagels K."/>
            <person name="James K.D."/>
            <person name="Lennard N."/>
            <person name="Line A."/>
            <person name="Mayes R."/>
            <person name="Moule S."/>
            <person name="Mungall K."/>
            <person name="Ormond D."/>
            <person name="Quail M.A."/>
            <person name="Rabbinowitsch E."/>
            <person name="Rutherford K.M."/>
            <person name="Sanders M."/>
            <person name="Sharp S."/>
            <person name="Simmonds M."/>
            <person name="Stevens K."/>
            <person name="Whitehead S."/>
            <person name="Barrell B.G."/>
            <person name="Spratt B.G."/>
            <person name="Parkhill J."/>
        </authorList>
    </citation>
    <scope>NUCLEOTIDE SEQUENCE [LARGE SCALE GENOMIC DNA]</scope>
    <source>
        <strain>MSSA476</strain>
    </source>
</reference>
<sequence>MNQIVLNIIIAFLWVLFQDEDHFKFSTFFSGYLIGLIVIYILHRFFSDDFYVRKIWVAIKFLGVYLYQLITSSISTINYILFKTKDMNPGLLSYETRLTSDWSITFLTILIIITPGSTVIRISQDSKKFFIHSIDVSEKEKDSLLRSIKHYEDLILEVSR</sequence>
<protein>
    <recommendedName>
        <fullName>Putative antiporter subunit mnhE2</fullName>
    </recommendedName>
    <alternativeName>
        <fullName>Mrp complex subunit E2</fullName>
    </alternativeName>
    <alternativeName>
        <fullName>Putative NADH-ubiquinone oxidoreductase subunit mnhE2</fullName>
    </alternativeName>
</protein>
<organism>
    <name type="scientific">Staphylococcus aureus (strain MSSA476)</name>
    <dbReference type="NCBI Taxonomy" id="282459"/>
    <lineage>
        <taxon>Bacteria</taxon>
        <taxon>Bacillati</taxon>
        <taxon>Bacillota</taxon>
        <taxon>Bacilli</taxon>
        <taxon>Bacillales</taxon>
        <taxon>Staphylococcaceae</taxon>
        <taxon>Staphylococcus</taxon>
    </lineage>
</organism>
<proteinExistence type="inferred from homology"/>
<keyword id="KW-0050">Antiport</keyword>
<keyword id="KW-1003">Cell membrane</keyword>
<keyword id="KW-0406">Ion transport</keyword>
<keyword id="KW-0472">Membrane</keyword>
<keyword id="KW-0812">Transmembrane</keyword>
<keyword id="KW-1133">Transmembrane helix</keyword>
<keyword id="KW-0813">Transport</keyword>
<comment type="subunit">
    <text evidence="1">May form a heterooligomeric complex that consists of seven subunits: mnhA2, mnhB2, mnhC2, mnhD2, mnhE2, mnhF2 and mnhG2.</text>
</comment>
<comment type="subcellular location">
    <subcellularLocation>
        <location evidence="3">Cell membrane</location>
        <topology evidence="3">Multi-pass membrane protein</topology>
    </subcellularLocation>
</comment>
<comment type="similarity">
    <text evidence="3">Belongs to the CPA3 antiporters (TC 2.A.63) subunit E family.</text>
</comment>
<accession>Q6GBK3</accession>
<gene>
    <name type="primary">mnhE2</name>
    <name type="synonym">mrpE2</name>
    <name type="ordered locus">SAS0593</name>
</gene>
<evidence type="ECO:0000250" key="1"/>
<evidence type="ECO:0000255" key="2"/>
<evidence type="ECO:0000305" key="3"/>
<name>MNHE2_STAAS</name>
<feature type="chain" id="PRO_0000372215" description="Putative antiporter subunit mnhE2">
    <location>
        <begin position="1"/>
        <end position="160"/>
    </location>
</feature>
<feature type="transmembrane region" description="Helical" evidence="2">
    <location>
        <begin position="22"/>
        <end position="42"/>
    </location>
</feature>
<feature type="transmembrane region" description="Helical" evidence="2">
    <location>
        <begin position="55"/>
        <end position="75"/>
    </location>
</feature>
<feature type="transmembrane region" description="Helical" evidence="2">
    <location>
        <begin position="100"/>
        <end position="120"/>
    </location>
</feature>